<comment type="function">
    <text evidence="1">F(1)F(0) ATP synthase produces ATP from ADP in the presence of a proton or sodium gradient. F-type ATPases consist of two structural domains, F(1) containing the extramembraneous catalytic core and F(0) containing the membrane proton channel, linked together by a central stalk and a peripheral stalk. During catalysis, ATP synthesis in the catalytic domain of F(1) is coupled via a rotary mechanism of the central stalk subunits to proton translocation.</text>
</comment>
<comment type="function">
    <text evidence="1">Component of the F(0) channel, it forms part of the peripheral stalk, linking F(1) to F(0).</text>
</comment>
<comment type="subunit">
    <text evidence="1">F-type ATPases have 2 components, F(1) - the catalytic core - and F(0) - the membrane proton channel. F(1) has five subunits: alpha(3), beta(3), gamma(1), delta(1), epsilon(1). F(0) has four main subunits: a(1), b(1), b'(1) and c(10-14). The alpha and beta chains form an alternating ring which encloses part of the gamma chain. F(1) is attached to F(0) by a central stalk formed by the gamma and epsilon chains, while a peripheral stalk is formed by the delta, b and b' chains.</text>
</comment>
<comment type="subcellular location">
    <subcellularLocation>
        <location evidence="1">Plastid</location>
        <location evidence="1">Chloroplast thylakoid membrane</location>
        <topology evidence="1">Single-pass membrane protein</topology>
    </subcellularLocation>
</comment>
<comment type="miscellaneous">
    <text>In plastids the F-type ATPase is also known as CF(1)CF(0).</text>
</comment>
<comment type="similarity">
    <text evidence="1">Belongs to the ATPase B chain family.</text>
</comment>
<organism>
    <name type="scientific">Ipomoea purpurea</name>
    <name type="common">Common morning glory</name>
    <name type="synonym">Pharbitis purpurea</name>
    <dbReference type="NCBI Taxonomy" id="4121"/>
    <lineage>
        <taxon>Eukaryota</taxon>
        <taxon>Viridiplantae</taxon>
        <taxon>Streptophyta</taxon>
        <taxon>Embryophyta</taxon>
        <taxon>Tracheophyta</taxon>
        <taxon>Spermatophyta</taxon>
        <taxon>Magnoliopsida</taxon>
        <taxon>eudicotyledons</taxon>
        <taxon>Gunneridae</taxon>
        <taxon>Pentapetalae</taxon>
        <taxon>asterids</taxon>
        <taxon>lamiids</taxon>
        <taxon>Solanales</taxon>
        <taxon>Convolvulaceae</taxon>
        <taxon>Ipomoeeae</taxon>
        <taxon>Ipomoea</taxon>
    </lineage>
</organism>
<proteinExistence type="inferred from homology"/>
<gene>
    <name evidence="1" type="primary">atpF</name>
</gene>
<feature type="chain" id="PRO_0000368942" description="ATP synthase subunit b, chloroplastic">
    <location>
        <begin position="1"/>
        <end position="184"/>
    </location>
</feature>
<feature type="transmembrane region" description="Helical" evidence="1">
    <location>
        <begin position="27"/>
        <end position="49"/>
    </location>
</feature>
<reference key="1">
    <citation type="journal article" date="2007" name="BMC Plant Biol.">
        <title>Complete plastid genome sequences suggest strong selection for retention of photosynthetic genes in the parasitic plant genus Cuscuta.</title>
        <authorList>
            <person name="McNeal J.R."/>
            <person name="Kuehl J.V."/>
            <person name="Boore J.L."/>
            <person name="dePamphilis C.W."/>
        </authorList>
    </citation>
    <scope>NUCLEOTIDE SEQUENCE [LARGE SCALE GENOMIC DNA]</scope>
</reference>
<keyword id="KW-0066">ATP synthesis</keyword>
<keyword id="KW-0138">CF(0)</keyword>
<keyword id="KW-0150">Chloroplast</keyword>
<keyword id="KW-0375">Hydrogen ion transport</keyword>
<keyword id="KW-0406">Ion transport</keyword>
<keyword id="KW-0472">Membrane</keyword>
<keyword id="KW-0934">Plastid</keyword>
<keyword id="KW-0793">Thylakoid</keyword>
<keyword id="KW-0812">Transmembrane</keyword>
<keyword id="KW-1133">Transmembrane helix</keyword>
<keyword id="KW-0813">Transport</keyword>
<sequence length="184" mass="20991">MKNVTDSFLSLGPWPSAGSFGFNTDIFATNPINLSVVLGVLIFFGKGVLSDLLDNRKQRILNTIRNSEELRGGAIEQLEKARARLRKIETEAEQFRVNGYSEIEREKLNLIQSTYKTLEQLENYKNETIRFEQQRALNQVRQRVFQQALQRALGTLNSCLNNELHLRTISANIGMLGTMKEITD</sequence>
<name>ATPF_IPOPU</name>
<evidence type="ECO:0000255" key="1">
    <source>
        <dbReference type="HAMAP-Rule" id="MF_01398"/>
    </source>
</evidence>
<dbReference type="EMBL" id="EU118126">
    <property type="protein sequence ID" value="ABV02334.1"/>
    <property type="molecule type" value="Genomic_DNA"/>
</dbReference>
<dbReference type="RefSeq" id="YP_001468294.1">
    <property type="nucleotide sequence ID" value="NC_009808.1"/>
</dbReference>
<dbReference type="SMR" id="A7Y3A6"/>
<dbReference type="GeneID" id="5601222"/>
<dbReference type="GO" id="GO:0009535">
    <property type="term" value="C:chloroplast thylakoid membrane"/>
    <property type="evidence" value="ECO:0007669"/>
    <property type="project" value="UniProtKB-SubCell"/>
</dbReference>
<dbReference type="GO" id="GO:0045259">
    <property type="term" value="C:proton-transporting ATP synthase complex"/>
    <property type="evidence" value="ECO:0007669"/>
    <property type="project" value="UniProtKB-KW"/>
</dbReference>
<dbReference type="GO" id="GO:0046933">
    <property type="term" value="F:proton-transporting ATP synthase activity, rotational mechanism"/>
    <property type="evidence" value="ECO:0007669"/>
    <property type="project" value="UniProtKB-UniRule"/>
</dbReference>
<dbReference type="CDD" id="cd06503">
    <property type="entry name" value="ATP-synt_Fo_b"/>
    <property type="match status" value="1"/>
</dbReference>
<dbReference type="HAMAP" id="MF_01398">
    <property type="entry name" value="ATP_synth_b_bprime"/>
    <property type="match status" value="1"/>
</dbReference>
<dbReference type="InterPro" id="IPR002146">
    <property type="entry name" value="ATP_synth_b/b'su_bac/chlpt"/>
</dbReference>
<dbReference type="PANTHER" id="PTHR34264">
    <property type="entry name" value="ATP SYNTHASE SUBUNIT B, CHLOROPLASTIC"/>
    <property type="match status" value="1"/>
</dbReference>
<dbReference type="PANTHER" id="PTHR34264:SF3">
    <property type="entry name" value="ATP SYNTHASE SUBUNIT B, CHLOROPLASTIC"/>
    <property type="match status" value="1"/>
</dbReference>
<dbReference type="Pfam" id="PF00430">
    <property type="entry name" value="ATP-synt_B"/>
    <property type="match status" value="1"/>
</dbReference>
<accession>A7Y3A6</accession>
<geneLocation type="chloroplast"/>
<protein>
    <recommendedName>
        <fullName evidence="1">ATP synthase subunit b, chloroplastic</fullName>
    </recommendedName>
    <alternativeName>
        <fullName evidence="1">ATP synthase F(0) sector subunit b</fullName>
    </alternativeName>
    <alternativeName>
        <fullName evidence="1">ATPase subunit I</fullName>
    </alternativeName>
</protein>